<comment type="function">
    <text evidence="1">Involved in base excision repair of DNA damaged by oxidation or by mutagenic agents. Acts as a DNA glycosylase that recognizes and removes damaged bases. Has a preference for oxidized pyrimidines, such as thymine glycol, 5,6-dihydrouracil and 5,6-dihydrothymine. Has AP (apurinic/apyrimidinic) lyase activity and introduces nicks in the DNA strand. Cleaves the DNA backbone by beta-delta elimination to generate a single-strand break at the site of the removed base with both 3'- and 5'-phosphates.</text>
</comment>
<comment type="catalytic activity">
    <reaction evidence="1">
        <text>2'-deoxyribonucleotide-(2'-deoxyribose 5'-phosphate)-2'-deoxyribonucleotide-DNA = a 3'-end 2'-deoxyribonucleotide-(2,3-dehydro-2,3-deoxyribose 5'-phosphate)-DNA + a 5'-end 5'-phospho-2'-deoxyribonucleoside-DNA + H(+)</text>
        <dbReference type="Rhea" id="RHEA:66592"/>
        <dbReference type="Rhea" id="RHEA-COMP:13180"/>
        <dbReference type="Rhea" id="RHEA-COMP:16897"/>
        <dbReference type="Rhea" id="RHEA-COMP:17067"/>
        <dbReference type="ChEBI" id="CHEBI:15378"/>
        <dbReference type="ChEBI" id="CHEBI:136412"/>
        <dbReference type="ChEBI" id="CHEBI:157695"/>
        <dbReference type="ChEBI" id="CHEBI:167181"/>
        <dbReference type="EC" id="4.2.99.18"/>
    </reaction>
</comment>
<comment type="cofactor">
    <cofactor evidence="1">
        <name>Zn(2+)</name>
        <dbReference type="ChEBI" id="CHEBI:29105"/>
    </cofactor>
    <text evidence="1">Binds 1 zinc ion per subunit.</text>
</comment>
<comment type="similarity">
    <text evidence="1">Belongs to the FPG family.</text>
</comment>
<proteinExistence type="inferred from homology"/>
<sequence>MPEGPEIRRAADNLEAAIKGKPLTDVWFAFAQLKPYESQLTGQLVTRIETRGKALLTHFSNGLTLYSHNQLYGVWRVIDTGEIPQTTRILRVRLQTADKTILLYSASDIEMLTAEQLTTHPFLQRVGPDVLDARLTPEEVKARLLSPRFRNRQFSGLLLDQSFLAGLGNYLRVEILWQVGLTGQHKAKDLNEAQLNALSHALLDIPRLSYTTRGQADENKHHGALFRFKLFHRDGEACERCGGIIEKTTLSSRPFYWCPHCQK</sequence>
<protein>
    <recommendedName>
        <fullName evidence="1">Endonuclease 8</fullName>
    </recommendedName>
    <alternativeName>
        <fullName evidence="1">DNA glycosylase/AP lyase Nei</fullName>
        <ecNumber evidence="1">3.2.2.-</ecNumber>
        <ecNumber evidence="1">4.2.99.18</ecNumber>
    </alternativeName>
    <alternativeName>
        <fullName evidence="1">DNA-(apurinic or apyrimidinic site) lyase Nei</fullName>
    </alternativeName>
    <alternativeName>
        <fullName evidence="1">Endonuclease VIII</fullName>
    </alternativeName>
</protein>
<keyword id="KW-0227">DNA damage</keyword>
<keyword id="KW-0234">DNA repair</keyword>
<keyword id="KW-0238">DNA-binding</keyword>
<keyword id="KW-0326">Glycosidase</keyword>
<keyword id="KW-0378">Hydrolase</keyword>
<keyword id="KW-0456">Lyase</keyword>
<keyword id="KW-0479">Metal-binding</keyword>
<keyword id="KW-0511">Multifunctional enzyme</keyword>
<keyword id="KW-1185">Reference proteome</keyword>
<keyword id="KW-0862">Zinc</keyword>
<keyword id="KW-0863">Zinc-finger</keyword>
<dbReference type="EC" id="3.2.2.-" evidence="1"/>
<dbReference type="EC" id="4.2.99.18" evidence="1"/>
<dbReference type="EMBL" id="AE006468">
    <property type="protein sequence ID" value="AAL19672.1"/>
    <property type="molecule type" value="Genomic_DNA"/>
</dbReference>
<dbReference type="RefSeq" id="NP_459713.1">
    <property type="nucleotide sequence ID" value="NC_003197.2"/>
</dbReference>
<dbReference type="RefSeq" id="WP_001113970.1">
    <property type="nucleotide sequence ID" value="NC_003197.2"/>
</dbReference>
<dbReference type="SMR" id="P0CL05"/>
<dbReference type="STRING" id="99287.STM0728"/>
<dbReference type="PaxDb" id="99287-STM0728"/>
<dbReference type="GeneID" id="1252248"/>
<dbReference type="KEGG" id="stm:STM0728"/>
<dbReference type="PATRIC" id="fig|99287.12.peg.760"/>
<dbReference type="HOGENOM" id="CLU_038423_2_2_6"/>
<dbReference type="OMA" id="YKSELCF"/>
<dbReference type="PhylomeDB" id="P0CL05"/>
<dbReference type="BioCyc" id="SENT99287:STM0728-MONOMER"/>
<dbReference type="Proteomes" id="UP000001014">
    <property type="component" value="Chromosome"/>
</dbReference>
<dbReference type="GO" id="GO:0140078">
    <property type="term" value="F:class I DNA-(apurinic or apyrimidinic site) endonuclease activity"/>
    <property type="evidence" value="ECO:0007669"/>
    <property type="project" value="UniProtKB-EC"/>
</dbReference>
<dbReference type="GO" id="GO:0003684">
    <property type="term" value="F:damaged DNA binding"/>
    <property type="evidence" value="ECO:0007669"/>
    <property type="project" value="InterPro"/>
</dbReference>
<dbReference type="GO" id="GO:0003906">
    <property type="term" value="F:DNA-(apurinic or apyrimidinic site) endonuclease activity"/>
    <property type="evidence" value="ECO:0000318"/>
    <property type="project" value="GO_Central"/>
</dbReference>
<dbReference type="GO" id="GO:0000703">
    <property type="term" value="F:oxidized pyrimidine nucleobase lesion DNA N-glycosylase activity"/>
    <property type="evidence" value="ECO:0000318"/>
    <property type="project" value="GO_Central"/>
</dbReference>
<dbReference type="GO" id="GO:0008270">
    <property type="term" value="F:zinc ion binding"/>
    <property type="evidence" value="ECO:0007669"/>
    <property type="project" value="UniProtKB-UniRule"/>
</dbReference>
<dbReference type="GO" id="GO:0006284">
    <property type="term" value="P:base-excision repair"/>
    <property type="evidence" value="ECO:0000318"/>
    <property type="project" value="GO_Central"/>
</dbReference>
<dbReference type="CDD" id="cd08965">
    <property type="entry name" value="EcNei-like_N"/>
    <property type="match status" value="1"/>
</dbReference>
<dbReference type="FunFam" id="1.10.8.50:FF:000005">
    <property type="entry name" value="Endonuclease 8"/>
    <property type="match status" value="1"/>
</dbReference>
<dbReference type="FunFam" id="3.20.190.10:FF:000002">
    <property type="entry name" value="Endonuclease 8"/>
    <property type="match status" value="1"/>
</dbReference>
<dbReference type="Gene3D" id="1.10.8.50">
    <property type="match status" value="1"/>
</dbReference>
<dbReference type="Gene3D" id="3.20.190.10">
    <property type="entry name" value="MutM-like, N-terminal"/>
    <property type="match status" value="1"/>
</dbReference>
<dbReference type="HAMAP" id="MF_01253">
    <property type="entry name" value="Endonuclease_8"/>
    <property type="match status" value="1"/>
</dbReference>
<dbReference type="InterPro" id="IPR015886">
    <property type="entry name" value="DNA_glyclase/AP_lyase_DNA-bd"/>
</dbReference>
<dbReference type="InterPro" id="IPR015887">
    <property type="entry name" value="DNA_glyclase_Znf_dom_DNA_BS"/>
</dbReference>
<dbReference type="InterPro" id="IPR044091">
    <property type="entry name" value="EcNei-like_N"/>
</dbReference>
<dbReference type="InterPro" id="IPR023713">
    <property type="entry name" value="Endonuclease-VIII"/>
</dbReference>
<dbReference type="InterPro" id="IPR012319">
    <property type="entry name" value="FPG_cat"/>
</dbReference>
<dbReference type="InterPro" id="IPR035937">
    <property type="entry name" value="MutM-like_N-ter"/>
</dbReference>
<dbReference type="InterPro" id="IPR010979">
    <property type="entry name" value="Ribosomal_uS13-like_H2TH"/>
</dbReference>
<dbReference type="InterPro" id="IPR000214">
    <property type="entry name" value="Znf_DNA_glyclase/AP_lyase"/>
</dbReference>
<dbReference type="InterPro" id="IPR010663">
    <property type="entry name" value="Znf_FPG/IleRS"/>
</dbReference>
<dbReference type="NCBIfam" id="NF007763">
    <property type="entry name" value="PRK10445.1"/>
    <property type="match status" value="1"/>
</dbReference>
<dbReference type="PANTHER" id="PTHR42697">
    <property type="entry name" value="ENDONUCLEASE 8"/>
    <property type="match status" value="1"/>
</dbReference>
<dbReference type="PANTHER" id="PTHR42697:SF1">
    <property type="entry name" value="ENDONUCLEASE 8"/>
    <property type="match status" value="1"/>
</dbReference>
<dbReference type="Pfam" id="PF01149">
    <property type="entry name" value="Fapy_DNA_glyco"/>
    <property type="match status" value="1"/>
</dbReference>
<dbReference type="Pfam" id="PF06831">
    <property type="entry name" value="H2TH"/>
    <property type="match status" value="1"/>
</dbReference>
<dbReference type="Pfam" id="PF06827">
    <property type="entry name" value="zf-FPG_IleRS"/>
    <property type="match status" value="1"/>
</dbReference>
<dbReference type="SMART" id="SM00898">
    <property type="entry name" value="Fapy_DNA_glyco"/>
    <property type="match status" value="1"/>
</dbReference>
<dbReference type="SMART" id="SM01232">
    <property type="entry name" value="H2TH"/>
    <property type="match status" value="1"/>
</dbReference>
<dbReference type="SUPFAM" id="SSF57716">
    <property type="entry name" value="Glucocorticoid receptor-like (DNA-binding domain)"/>
    <property type="match status" value="1"/>
</dbReference>
<dbReference type="SUPFAM" id="SSF81624">
    <property type="entry name" value="N-terminal domain of MutM-like DNA repair proteins"/>
    <property type="match status" value="1"/>
</dbReference>
<dbReference type="SUPFAM" id="SSF46946">
    <property type="entry name" value="S13-like H2TH domain"/>
    <property type="match status" value="1"/>
</dbReference>
<dbReference type="PROSITE" id="PS51068">
    <property type="entry name" value="FPG_CAT"/>
    <property type="match status" value="1"/>
</dbReference>
<dbReference type="PROSITE" id="PS01242">
    <property type="entry name" value="ZF_FPG_1"/>
    <property type="match status" value="1"/>
</dbReference>
<dbReference type="PROSITE" id="PS51066">
    <property type="entry name" value="ZF_FPG_2"/>
    <property type="match status" value="1"/>
</dbReference>
<accession>P0CL05</accession>
<accession>Q8ZQU6</accession>
<accession>Q9F612</accession>
<gene>
    <name evidence="1" type="primary">nei</name>
    <name type="ordered locus">STM0728</name>
</gene>
<organism>
    <name type="scientific">Salmonella typhimurium (strain LT2 / SGSC1412 / ATCC 700720)</name>
    <dbReference type="NCBI Taxonomy" id="99287"/>
    <lineage>
        <taxon>Bacteria</taxon>
        <taxon>Pseudomonadati</taxon>
        <taxon>Pseudomonadota</taxon>
        <taxon>Gammaproteobacteria</taxon>
        <taxon>Enterobacterales</taxon>
        <taxon>Enterobacteriaceae</taxon>
        <taxon>Salmonella</taxon>
    </lineage>
</organism>
<name>END8_SALTY</name>
<feature type="initiator methionine" description="Removed" evidence="1">
    <location>
        <position position="1"/>
    </location>
</feature>
<feature type="chain" id="PRO_0000170898" description="Endonuclease 8">
    <location>
        <begin position="2"/>
        <end position="263"/>
    </location>
</feature>
<feature type="zinc finger region" description="FPG-type" evidence="1">
    <location>
        <begin position="229"/>
        <end position="263"/>
    </location>
</feature>
<feature type="active site" description="Schiff-base intermediate with DNA" evidence="1">
    <location>
        <position position="2"/>
    </location>
</feature>
<feature type="active site" description="Proton donor" evidence="1">
    <location>
        <position position="3"/>
    </location>
</feature>
<feature type="active site" description="Proton donor; for beta-elimination activity" evidence="1">
    <location>
        <position position="53"/>
    </location>
</feature>
<feature type="active site" description="Proton donor; for delta-elimination activity" evidence="1">
    <location>
        <position position="253"/>
    </location>
</feature>
<feature type="binding site" evidence="1">
    <location>
        <position position="70"/>
    </location>
    <ligand>
        <name>DNA</name>
        <dbReference type="ChEBI" id="CHEBI:16991"/>
    </ligand>
</feature>
<feature type="binding site" evidence="1">
    <location>
        <position position="125"/>
    </location>
    <ligand>
        <name>DNA</name>
        <dbReference type="ChEBI" id="CHEBI:16991"/>
    </ligand>
</feature>
<feature type="binding site" evidence="1">
    <location>
        <position position="169"/>
    </location>
    <ligand>
        <name>DNA</name>
        <dbReference type="ChEBI" id="CHEBI:16991"/>
    </ligand>
</feature>
<evidence type="ECO:0000255" key="1">
    <source>
        <dbReference type="HAMAP-Rule" id="MF_01253"/>
    </source>
</evidence>
<reference key="1">
    <citation type="journal article" date="2001" name="Nature">
        <title>Complete genome sequence of Salmonella enterica serovar Typhimurium LT2.</title>
        <authorList>
            <person name="McClelland M."/>
            <person name="Sanderson K.E."/>
            <person name="Spieth J."/>
            <person name="Clifton S.W."/>
            <person name="Latreille P."/>
            <person name="Courtney L."/>
            <person name="Porwollik S."/>
            <person name="Ali J."/>
            <person name="Dante M."/>
            <person name="Du F."/>
            <person name="Hou S."/>
            <person name="Layman D."/>
            <person name="Leonard S."/>
            <person name="Nguyen C."/>
            <person name="Scott K."/>
            <person name="Holmes A."/>
            <person name="Grewal N."/>
            <person name="Mulvaney E."/>
            <person name="Ryan E."/>
            <person name="Sun H."/>
            <person name="Florea L."/>
            <person name="Miller W."/>
            <person name="Stoneking T."/>
            <person name="Nhan M."/>
            <person name="Waterston R."/>
            <person name="Wilson R.K."/>
        </authorList>
    </citation>
    <scope>NUCLEOTIDE SEQUENCE [LARGE SCALE GENOMIC DNA]</scope>
    <source>
        <strain>LT2 / SGSC1412 / ATCC 700720</strain>
    </source>
</reference>